<keyword id="KW-0007">Acetylation</keyword>
<keyword id="KW-0963">Cytoplasm</keyword>
<keyword id="KW-0968">Cytoplasmic vesicle</keyword>
<keyword id="KW-0539">Nucleus</keyword>
<keyword id="KW-1185">Reference proteome</keyword>
<keyword id="KW-0736">Signalosome</keyword>
<keyword id="KW-0770">Synapse</keyword>
<comment type="function">
    <text evidence="1">Component of the COP9 signalosome complex (CSN), a complex involved in various cellular and developmental processes (By similarity). The CSN complex is an essential regulator of the ubiquitin (Ubl) conjugation pathway by mediating the deneddylation of the cullin subunits of SCF-type E3 ligase complexes, leading to decrease the Ubl ligase activity of SCF-type complexes such as SCF, CSA or DDB2 (By similarity). Also involved in the deneddylation of non-cullin subunits such as STON2 (By similarity). The complex is also involved in phosphorylation of p53/TP53, c-jun/JUN, IkappaBalpha/NFKBIA, ITPK1, IRF8/ICSBP and SNAPIN, possibly via its association with CK2 and PKD kinases (By similarity). CSN-dependent phosphorylation of TP53 and JUN promotes and protects degradation by the Ubl system, respectively (By similarity).</text>
</comment>
<comment type="subunit">
    <text evidence="1">Component of the CSN complex, composed of COPS1/GPS1, COPS2, COPS3, COPS4, COPS5, COPS6, COPS7 (COPS7A or COPS7B), COPS8 and COPS9 (By similarity). In the complex, it probably interacts directly with COPS1, COPS2, COPS3, COPS5, COPS6, COPS7 (COPS7A or COPS7B) and COPS8 (By similarity). Interacts with TOR1A; the interaction is direct and associates TOR1A and SNAPIN with the CSN complex (By similarity). Interacts with STON2; controls STON2 neddylation levels (By similarity). Interacts with ERCC6 (By similarity).</text>
</comment>
<comment type="subcellular location">
    <subcellularLocation>
        <location evidence="1">Cytoplasm</location>
    </subcellularLocation>
    <subcellularLocation>
        <location evidence="1">Nucleus</location>
    </subcellularLocation>
    <subcellularLocation>
        <location evidence="1">Cytoplasmic vesicle</location>
        <location evidence="1">Secretory vesicle</location>
        <location evidence="1">Synaptic vesicle</location>
    </subcellularLocation>
</comment>
<comment type="similarity">
    <text evidence="3">Belongs to the CSN4 family.</text>
</comment>
<dbReference type="EMBL" id="BC103017">
    <property type="protein sequence ID" value="AAI03018.1"/>
    <property type="molecule type" value="mRNA"/>
</dbReference>
<dbReference type="RefSeq" id="NP_001029866.1">
    <property type="nucleotide sequence ID" value="NM_001034694.2"/>
</dbReference>
<dbReference type="SMR" id="Q3SZA0"/>
<dbReference type="FunCoup" id="Q3SZA0">
    <property type="interactions" value="4467"/>
</dbReference>
<dbReference type="STRING" id="9913.ENSBTAP00000009128"/>
<dbReference type="PaxDb" id="9913-ENSBTAP00000009128"/>
<dbReference type="Ensembl" id="ENSBTAT00000116597.1">
    <property type="protein sequence ID" value="ENSBTAP00000082771.1"/>
    <property type="gene ID" value="ENSBTAG00000006950.6"/>
</dbReference>
<dbReference type="GeneID" id="540223"/>
<dbReference type="KEGG" id="bta:540223"/>
<dbReference type="CTD" id="51138"/>
<dbReference type="VEuPathDB" id="HostDB:ENSBTAG00000006950"/>
<dbReference type="VGNC" id="VGNC:27601">
    <property type="gene designation" value="COPS4"/>
</dbReference>
<dbReference type="eggNOG" id="KOG1497">
    <property type="taxonomic scope" value="Eukaryota"/>
</dbReference>
<dbReference type="GeneTree" id="ENSGT00940000153510"/>
<dbReference type="HOGENOM" id="CLU_028132_1_0_1"/>
<dbReference type="InParanoid" id="Q3SZA0"/>
<dbReference type="OMA" id="KNIMHTV"/>
<dbReference type="OrthoDB" id="295656at2759"/>
<dbReference type="TreeFam" id="TF101147"/>
<dbReference type="Reactome" id="R-BTA-5696394">
    <property type="pathway name" value="DNA Damage Recognition in GG-NER"/>
</dbReference>
<dbReference type="Reactome" id="R-BTA-6781823">
    <property type="pathway name" value="Formation of TC-NER Pre-Incision Complex"/>
</dbReference>
<dbReference type="Reactome" id="R-BTA-8856825">
    <property type="pathway name" value="Cargo recognition for clathrin-mediated endocytosis"/>
</dbReference>
<dbReference type="Reactome" id="R-BTA-8951664">
    <property type="pathway name" value="Neddylation"/>
</dbReference>
<dbReference type="Reactome" id="R-BTA-9013422">
    <property type="pathway name" value="RHOBTB1 GTPase cycle"/>
</dbReference>
<dbReference type="Proteomes" id="UP000009136">
    <property type="component" value="Chromosome 6"/>
</dbReference>
<dbReference type="Bgee" id="ENSBTAG00000006950">
    <property type="expression patterns" value="Expressed in oocyte and 107 other cell types or tissues"/>
</dbReference>
<dbReference type="GO" id="GO:0008180">
    <property type="term" value="C:COP9 signalosome"/>
    <property type="evidence" value="ECO:0000318"/>
    <property type="project" value="GO_Central"/>
</dbReference>
<dbReference type="GO" id="GO:0008021">
    <property type="term" value="C:synaptic vesicle"/>
    <property type="evidence" value="ECO:0007669"/>
    <property type="project" value="UniProtKB-SubCell"/>
</dbReference>
<dbReference type="GO" id="GO:0000338">
    <property type="term" value="P:protein deneddylation"/>
    <property type="evidence" value="ECO:0000250"/>
    <property type="project" value="UniProtKB"/>
</dbReference>
<dbReference type="FunFam" id="1.10.10.10:FF:000130">
    <property type="entry name" value="COP9 signalosome complex subunit 4"/>
    <property type="match status" value="1"/>
</dbReference>
<dbReference type="Gene3D" id="1.10.10.10">
    <property type="entry name" value="Winged helix-like DNA-binding domain superfamily/Winged helix DNA-binding domain"/>
    <property type="match status" value="1"/>
</dbReference>
<dbReference type="InterPro" id="IPR041406">
    <property type="entry name" value="CSN4_HTH"/>
</dbReference>
<dbReference type="InterPro" id="IPR000717">
    <property type="entry name" value="PCI_dom"/>
</dbReference>
<dbReference type="InterPro" id="IPR054559">
    <property type="entry name" value="PSMD12-CSN4-like_N"/>
</dbReference>
<dbReference type="InterPro" id="IPR040134">
    <property type="entry name" value="PSMD12/CSN4"/>
</dbReference>
<dbReference type="InterPro" id="IPR036388">
    <property type="entry name" value="WH-like_DNA-bd_sf"/>
</dbReference>
<dbReference type="InterPro" id="IPR036390">
    <property type="entry name" value="WH_DNA-bd_sf"/>
</dbReference>
<dbReference type="PANTHER" id="PTHR10855">
    <property type="entry name" value="26S PROTEASOME NON-ATPASE REGULATORY SUBUNIT 12/COP9 SIGNALOSOME COMPLEX SUBUNIT 4"/>
    <property type="match status" value="1"/>
</dbReference>
<dbReference type="PANTHER" id="PTHR10855:SF2">
    <property type="entry name" value="COP9 SIGNALOSOME COMPLEX SUBUNIT 4"/>
    <property type="match status" value="1"/>
</dbReference>
<dbReference type="Pfam" id="PF18420">
    <property type="entry name" value="CSN4_RPN5_eIF3a"/>
    <property type="match status" value="1"/>
</dbReference>
<dbReference type="Pfam" id="PF01399">
    <property type="entry name" value="PCI"/>
    <property type="match status" value="1"/>
</dbReference>
<dbReference type="Pfam" id="PF22241">
    <property type="entry name" value="PSMD12-CSN4_N"/>
    <property type="match status" value="1"/>
</dbReference>
<dbReference type="SMART" id="SM00088">
    <property type="entry name" value="PINT"/>
    <property type="match status" value="1"/>
</dbReference>
<dbReference type="SUPFAM" id="SSF46785">
    <property type="entry name" value="Winged helix' DNA-binding domain"/>
    <property type="match status" value="1"/>
</dbReference>
<dbReference type="PROSITE" id="PS50250">
    <property type="entry name" value="PCI"/>
    <property type="match status" value="1"/>
</dbReference>
<protein>
    <recommendedName>
        <fullName>COP9 signalosome complex subunit 4</fullName>
        <shortName>SGN4</shortName>
        <shortName>Signalosome subunit 4</shortName>
    </recommendedName>
</protein>
<reference key="1">
    <citation type="submission" date="2005-08" db="EMBL/GenBank/DDBJ databases">
        <authorList>
            <consortium name="NIH - Mammalian Gene Collection (MGC) project"/>
        </authorList>
    </citation>
    <scope>NUCLEOTIDE SEQUENCE [LARGE SCALE MRNA]</scope>
    <source>
        <strain>Crossbred X Angus</strain>
        <tissue>Ileum</tissue>
    </source>
</reference>
<accession>Q3SZA0</accession>
<gene>
    <name type="primary">COPS4</name>
</gene>
<sequence>MAAAVRQDLAQLMNSSGSHKDLAGKYRQILEKAIQLSGAEQLEALKAFVESMVNENVSLVISRQLLTDFCTHLPNLPDSTAKEIYHFTLEKIQPRVISFEEQVASIRQHLASIYEKEEDWRNAAQVLVGIPLETGQKQYNVDYKLETYLKIARLYLEDDDPVQAEAYINRASLLQNESTNEQLQIHYKVCYARVLDYRRKFIEAAQRYNELSYKTIVHESERLEALKHALHCTILASAGQQRSRMLATLFKDERCQQLAAYGILEKMYLDRIIRGNQLQEFAAMLMPHQKATTADGSSILDRAVIEHNLLSASKLYNNITFEELGALLEIPAAKAEKIASQMITEGRMNGFIDQIDGIVHFETREALPTWDKQIQSLCFQVNNLLEKISQTAPEWTAQAMEAQMAQ</sequence>
<name>CSN4_BOVIN</name>
<evidence type="ECO:0000250" key="1">
    <source>
        <dbReference type="UniProtKB" id="Q9BT78"/>
    </source>
</evidence>
<evidence type="ECO:0000255" key="2">
    <source>
        <dbReference type="PROSITE-ProRule" id="PRU01185"/>
    </source>
</evidence>
<evidence type="ECO:0000305" key="3"/>
<organism>
    <name type="scientific">Bos taurus</name>
    <name type="common">Bovine</name>
    <dbReference type="NCBI Taxonomy" id="9913"/>
    <lineage>
        <taxon>Eukaryota</taxon>
        <taxon>Metazoa</taxon>
        <taxon>Chordata</taxon>
        <taxon>Craniata</taxon>
        <taxon>Vertebrata</taxon>
        <taxon>Euteleostomi</taxon>
        <taxon>Mammalia</taxon>
        <taxon>Eutheria</taxon>
        <taxon>Laurasiatheria</taxon>
        <taxon>Artiodactyla</taxon>
        <taxon>Ruminantia</taxon>
        <taxon>Pecora</taxon>
        <taxon>Bovidae</taxon>
        <taxon>Bovinae</taxon>
        <taxon>Bos</taxon>
    </lineage>
</organism>
<proteinExistence type="evidence at transcript level"/>
<feature type="initiator methionine" description="Removed" evidence="1">
    <location>
        <position position="1"/>
    </location>
</feature>
<feature type="chain" id="PRO_0000290345" description="COP9 signalosome complex subunit 4">
    <location>
        <begin position="2"/>
        <end position="406"/>
    </location>
</feature>
<feature type="domain" description="PCI" evidence="2">
    <location>
        <begin position="197"/>
        <end position="366"/>
    </location>
</feature>
<feature type="modified residue" description="N-acetylalanine" evidence="1">
    <location>
        <position position="2"/>
    </location>
</feature>
<feature type="modified residue" description="N6-acetyllysine" evidence="1">
    <location>
        <position position="25"/>
    </location>
</feature>